<protein>
    <recommendedName>
        <fullName evidence="1">UPF0441 protein YgiB</fullName>
    </recommendedName>
</protein>
<proteinExistence type="inferred from homology"/>
<comment type="similarity">
    <text evidence="1">Belongs to the UPF0441 family.</text>
</comment>
<reference key="1">
    <citation type="submission" date="2008-05" db="EMBL/GenBank/DDBJ databases">
        <title>Complete sequence of Shigella boydii serotype 18 strain BS512.</title>
        <authorList>
            <person name="Rasko D.A."/>
            <person name="Rosovitz M."/>
            <person name="Maurelli A.T."/>
            <person name="Myers G."/>
            <person name="Seshadri R."/>
            <person name="Cer R."/>
            <person name="Jiang L."/>
            <person name="Ravel J."/>
            <person name="Sebastian Y."/>
        </authorList>
    </citation>
    <scope>NUCLEOTIDE SEQUENCE [LARGE SCALE GENOMIC DNA]</scope>
    <source>
        <strain>CDC 3083-94 / BS512</strain>
    </source>
</reference>
<feature type="chain" id="PRO_1000138355" description="UPF0441 protein YgiB">
    <location>
        <begin position="1"/>
        <end position="223"/>
    </location>
</feature>
<feature type="region of interest" description="Disordered" evidence="2">
    <location>
        <begin position="178"/>
        <end position="223"/>
    </location>
</feature>
<feature type="compositionally biased region" description="Low complexity" evidence="2">
    <location>
        <begin position="178"/>
        <end position="195"/>
    </location>
</feature>
<feature type="compositionally biased region" description="Polar residues" evidence="2">
    <location>
        <begin position="204"/>
        <end position="223"/>
    </location>
</feature>
<name>YGIB_SHIB3</name>
<organism>
    <name type="scientific">Shigella boydii serotype 18 (strain CDC 3083-94 / BS512)</name>
    <dbReference type="NCBI Taxonomy" id="344609"/>
    <lineage>
        <taxon>Bacteria</taxon>
        <taxon>Pseudomonadati</taxon>
        <taxon>Pseudomonadota</taxon>
        <taxon>Gammaproteobacteria</taxon>
        <taxon>Enterobacterales</taxon>
        <taxon>Enterobacteriaceae</taxon>
        <taxon>Shigella</taxon>
    </lineage>
</organism>
<dbReference type="EMBL" id="CP001063">
    <property type="protein sequence ID" value="ACD07870.1"/>
    <property type="molecule type" value="Genomic_DNA"/>
</dbReference>
<dbReference type="RefSeq" id="WP_000831554.1">
    <property type="nucleotide sequence ID" value="NC_010658.1"/>
</dbReference>
<dbReference type="SMR" id="B2U1E4"/>
<dbReference type="STRING" id="344609.SbBS512_E3469"/>
<dbReference type="KEGG" id="sbc:SbBS512_E3469"/>
<dbReference type="HOGENOM" id="CLU_095624_0_0_6"/>
<dbReference type="Proteomes" id="UP000001030">
    <property type="component" value="Chromosome"/>
</dbReference>
<dbReference type="HAMAP" id="MF_01188">
    <property type="entry name" value="UPF0441"/>
    <property type="match status" value="1"/>
</dbReference>
<dbReference type="InterPro" id="IPR009576">
    <property type="entry name" value="Biofilm_formation_YgiB"/>
</dbReference>
<dbReference type="NCBIfam" id="NF008655">
    <property type="entry name" value="PRK11653.1"/>
    <property type="match status" value="1"/>
</dbReference>
<dbReference type="Pfam" id="PF06693">
    <property type="entry name" value="DUF1190"/>
    <property type="match status" value="1"/>
</dbReference>
<keyword id="KW-1185">Reference proteome</keyword>
<accession>B2U1E4</accession>
<evidence type="ECO:0000255" key="1">
    <source>
        <dbReference type="HAMAP-Rule" id="MF_01188"/>
    </source>
</evidence>
<evidence type="ECO:0000256" key="2">
    <source>
        <dbReference type="SAM" id="MobiDB-lite"/>
    </source>
</evidence>
<gene>
    <name evidence="1" type="primary">ygiB</name>
    <name type="ordered locus">SbBS512_E3469</name>
</gene>
<sequence length="223" mass="23509">MKRTKSIRHASFRKNWSARHLTPVALAVATVFMLASCEKSDETVSLYQNADDCSAANPGKSAECTTAYNNALKEAERTAPKYATREDCVAEFGEGQCQQAPAQAGMAPENQAQAQQSSGSFWMPLMAGYMMGRLMGGGAGFAQQPLFSSKNPASPAYGKYTDATGKNYGAAQPGRTMTVPKTAMAPKPATTTTVTRGGFGESVAKQSTMQRSATGTSSRSMGG</sequence>